<name>PTH2_YEAST</name>
<gene>
    <name evidence="5" type="primary">PTH2</name>
    <name type="ordered locus">YBL057C</name>
    <name type="ORF">YBL0510</name>
    <name type="ORF">YBL0514</name>
</gene>
<protein>
    <recommendedName>
        <fullName evidence="5">Peptidyl-tRNA hydrolase 2</fullName>
        <shortName evidence="5">PTH 2</shortName>
        <ecNumber evidence="3">3.1.1.29</ecNumber>
    </recommendedName>
</protein>
<accession>P34222</accession>
<accession>D6VPU3</accession>
<reference key="1">
    <citation type="journal article" date="1993" name="Yeast">
        <title>Sequencing and functional analysis of a 32,560 bp segment on the left arm of yeast chromosome II. Identification of 26 open reading frames, including the KIP1 and SEC17 genes.</title>
        <authorList>
            <person name="Scherens B."/>
            <person name="el Bakkoury M."/>
            <person name="Vierendeels F."/>
            <person name="Dubois E."/>
            <person name="Messenguy F."/>
        </authorList>
    </citation>
    <scope>NUCLEOTIDE SEQUENCE [GENOMIC DNA]</scope>
    <source>
        <strain>ATCC 204508 / S288c</strain>
    </source>
</reference>
<reference key="2">
    <citation type="journal article" date="1994" name="EMBO J.">
        <title>Complete DNA sequence of yeast chromosome II.</title>
        <authorList>
            <person name="Feldmann H."/>
            <person name="Aigle M."/>
            <person name="Aljinovic G."/>
            <person name="Andre B."/>
            <person name="Baclet M.C."/>
            <person name="Barthe C."/>
            <person name="Baur A."/>
            <person name="Becam A.-M."/>
            <person name="Biteau N."/>
            <person name="Boles E."/>
            <person name="Brandt T."/>
            <person name="Brendel M."/>
            <person name="Brueckner M."/>
            <person name="Bussereau F."/>
            <person name="Christiansen C."/>
            <person name="Contreras R."/>
            <person name="Crouzet M."/>
            <person name="Cziepluch C."/>
            <person name="Demolis N."/>
            <person name="Delaveau T."/>
            <person name="Doignon F."/>
            <person name="Domdey H."/>
            <person name="Duesterhus S."/>
            <person name="Dubois E."/>
            <person name="Dujon B."/>
            <person name="El Bakkoury M."/>
            <person name="Entian K.-D."/>
            <person name="Feuermann M."/>
            <person name="Fiers W."/>
            <person name="Fobo G.M."/>
            <person name="Fritz C."/>
            <person name="Gassenhuber J."/>
            <person name="Glansdorff N."/>
            <person name="Goffeau A."/>
            <person name="Grivell L.A."/>
            <person name="de Haan M."/>
            <person name="Hein C."/>
            <person name="Herbert C.J."/>
            <person name="Hollenberg C.P."/>
            <person name="Holmstroem K."/>
            <person name="Jacq C."/>
            <person name="Jacquet M."/>
            <person name="Jauniaux J.-C."/>
            <person name="Jonniaux J.-L."/>
            <person name="Kallesoee T."/>
            <person name="Kiesau P."/>
            <person name="Kirchrath L."/>
            <person name="Koetter P."/>
            <person name="Korol S."/>
            <person name="Liebl S."/>
            <person name="Logghe M."/>
            <person name="Lohan A.J.E."/>
            <person name="Louis E.J."/>
            <person name="Li Z.Y."/>
            <person name="Maat M.J."/>
            <person name="Mallet L."/>
            <person name="Mannhaupt G."/>
            <person name="Messenguy F."/>
            <person name="Miosga T."/>
            <person name="Molemans F."/>
            <person name="Mueller S."/>
            <person name="Nasr F."/>
            <person name="Obermaier B."/>
            <person name="Perea J."/>
            <person name="Pierard A."/>
            <person name="Piravandi E."/>
            <person name="Pohl F.M."/>
            <person name="Pohl T.M."/>
            <person name="Potier S."/>
            <person name="Proft M."/>
            <person name="Purnelle B."/>
            <person name="Ramezani Rad M."/>
            <person name="Rieger M."/>
            <person name="Rose M."/>
            <person name="Schaaff-Gerstenschlaeger I."/>
            <person name="Scherens B."/>
            <person name="Schwarzlose C."/>
            <person name="Skala J."/>
            <person name="Slonimski P.P."/>
            <person name="Smits P.H.M."/>
            <person name="Souciet J.-L."/>
            <person name="Steensma H.Y."/>
            <person name="Stucka R."/>
            <person name="Urrestarazu L.A."/>
            <person name="van der Aart Q.J.M."/>
            <person name="Van Dyck L."/>
            <person name="Vassarotti A."/>
            <person name="Vetter I."/>
            <person name="Vierendeels F."/>
            <person name="Vissers S."/>
            <person name="Wagner G."/>
            <person name="de Wergifosse P."/>
            <person name="Wolfe K.H."/>
            <person name="Zagulski M."/>
            <person name="Zimmermann F.K."/>
            <person name="Mewes H.-W."/>
            <person name="Kleine K."/>
        </authorList>
    </citation>
    <scope>NUCLEOTIDE SEQUENCE [LARGE SCALE GENOMIC DNA]</scope>
    <source>
        <strain>ATCC 204508 / S288c</strain>
    </source>
</reference>
<reference key="3">
    <citation type="journal article" date="2014" name="G3 (Bethesda)">
        <title>The reference genome sequence of Saccharomyces cerevisiae: Then and now.</title>
        <authorList>
            <person name="Engel S.R."/>
            <person name="Dietrich F.S."/>
            <person name="Fisk D.G."/>
            <person name="Binkley G."/>
            <person name="Balakrishnan R."/>
            <person name="Costanzo M.C."/>
            <person name="Dwight S.S."/>
            <person name="Hitz B.C."/>
            <person name="Karra K."/>
            <person name="Nash R.S."/>
            <person name="Weng S."/>
            <person name="Wong E.D."/>
            <person name="Lloyd P."/>
            <person name="Skrzypek M.S."/>
            <person name="Miyasato S.R."/>
            <person name="Simison M."/>
            <person name="Cherry J.M."/>
        </authorList>
    </citation>
    <scope>GENOME REANNOTATION</scope>
    <source>
        <strain>ATCC 204508 / S288c</strain>
    </source>
</reference>
<reference key="4">
    <citation type="journal article" date="2007" name="Genome Res.">
        <title>Approaching a complete repository of sequence-verified protein-encoding clones for Saccharomyces cerevisiae.</title>
        <authorList>
            <person name="Hu Y."/>
            <person name="Rolfs A."/>
            <person name="Bhullar B."/>
            <person name="Murthy T.V.S."/>
            <person name="Zhu C."/>
            <person name="Berger M.F."/>
            <person name="Camargo A.A."/>
            <person name="Kelley F."/>
            <person name="McCarron S."/>
            <person name="Jepson D."/>
            <person name="Richardson A."/>
            <person name="Raphael J."/>
            <person name="Moreira D."/>
            <person name="Taycher E."/>
            <person name="Zuo D."/>
            <person name="Mohr S."/>
            <person name="Kane M.F."/>
            <person name="Williamson J."/>
            <person name="Simpson A.J.G."/>
            <person name="Bulyk M.L."/>
            <person name="Harlow E."/>
            <person name="Marsischky G."/>
            <person name="Kolodner R.D."/>
            <person name="LaBaer J."/>
        </authorList>
    </citation>
    <scope>NUCLEOTIDE SEQUENCE [GENOMIC DNA]</scope>
    <source>
        <strain>ATCC 204508 / S288c</strain>
    </source>
</reference>
<reference key="5">
    <citation type="journal article" date="2002" name="Proc. Natl. Acad. Sci. U.S.A.">
        <title>Orthologs of a novel archaeal and of the bacterial peptidyl-tRNA hydrolase are nonessential in yeast.</title>
        <authorList>
            <person name="Rosas-Sandoval G."/>
            <person name="Ambrogelly A."/>
            <person name="Rinehart J."/>
            <person name="Wei D."/>
            <person name="Cruz-Vera L.R."/>
            <person name="Graham D.E."/>
            <person name="Stetter K.O."/>
            <person name="Guarneros G."/>
            <person name="Soell D."/>
        </authorList>
    </citation>
    <scope>FUNCTION</scope>
</reference>
<reference key="6">
    <citation type="journal article" date="2003" name="Nature">
        <title>Global analysis of protein expression in yeast.</title>
        <authorList>
            <person name="Ghaemmaghami S."/>
            <person name="Huh W.-K."/>
            <person name="Bower K."/>
            <person name="Howson R.W."/>
            <person name="Belle A."/>
            <person name="Dephoure N."/>
            <person name="O'Shea E.K."/>
            <person name="Weissman J.S."/>
        </authorList>
    </citation>
    <scope>LEVEL OF PROTEIN EXPRESSION [LARGE SCALE ANALYSIS]</scope>
</reference>
<reference key="7">
    <citation type="journal article" date="2003" name="Nucleic Acids Res.">
        <title>Peptidyl-tRNA hydrolase from Sulfolobus solfataricus.</title>
        <authorList>
            <person name="Fromant M."/>
            <person name="Ferri-Fioni M.-L."/>
            <person name="Plateau P."/>
            <person name="Blanquet S."/>
        </authorList>
    </citation>
    <scope>FUNCTION</scope>
    <scope>CATALYTIC ACTIVITY</scope>
</reference>
<reference key="8">
    <citation type="journal article" date="2003" name="Proc. Natl. Acad. Sci. U.S.A.">
        <title>A subset of membrane-associated proteins is ubiquitinated in response to mutations in the endoplasmic reticulum degradation machinery.</title>
        <authorList>
            <person name="Hitchcock A.L."/>
            <person name="Auld K."/>
            <person name="Gygi S.P."/>
            <person name="Silver P.A."/>
        </authorList>
    </citation>
    <scope>UBIQUITINATION [LARGE SCALE ANALYSIS] AT LYS-152</scope>
    <scope>IDENTIFICATION BY MASS SPECTROMETRY</scope>
</reference>
<reference key="9">
    <citation type="journal article" date="2012" name="Proteomics">
        <title>Sites of ubiquitin attachment in Saccharomyces cerevisiae.</title>
        <authorList>
            <person name="Starita L.M."/>
            <person name="Lo R.S."/>
            <person name="Eng J.K."/>
            <person name="von Haller P.D."/>
            <person name="Fields S."/>
        </authorList>
    </citation>
    <scope>UBIQUITINATION [LARGE SCALE ANALYSIS] AT LYS-152</scope>
    <scope>IDENTIFICATION BY MASS SPECTROMETRY [LARGE SCALE ANALYSIS]</scope>
</reference>
<evidence type="ECO:0000256" key="1">
    <source>
        <dbReference type="SAM" id="MobiDB-lite"/>
    </source>
</evidence>
<evidence type="ECO:0000269" key="2">
    <source>
    </source>
</evidence>
<evidence type="ECO:0000269" key="3">
    <source>
    </source>
</evidence>
<evidence type="ECO:0000269" key="4">
    <source>
    </source>
</evidence>
<evidence type="ECO:0000303" key="5">
    <source>
    </source>
</evidence>
<evidence type="ECO:0000305" key="6"/>
<evidence type="ECO:0007744" key="7">
    <source>
    </source>
</evidence>
<sequence>MEKMTVSSNYTIALWATFTAISFAVGYQLGTSNASSTKKSSATLLRSKEMKEGKLHNDTDEEESESEDESDEDEDIESTSLNDIPGEVRMALVIRQDLGMTKGKIAAQCCHAALSCFRHIATNPARASYNPIMTQRWLNAGQAKITLKCPDKFTMDELYAKAISLGVNAAVIHDAGRTQIAAGSATVLGLGPAPKAVLDQITGDLKLY</sequence>
<proteinExistence type="evidence at protein level"/>
<keyword id="KW-0963">Cytoplasm</keyword>
<keyword id="KW-0378">Hydrolase</keyword>
<keyword id="KW-1017">Isopeptide bond</keyword>
<keyword id="KW-1185">Reference proteome</keyword>
<keyword id="KW-0832">Ubl conjugation</keyword>
<organism>
    <name type="scientific">Saccharomyces cerevisiae (strain ATCC 204508 / S288c)</name>
    <name type="common">Baker's yeast</name>
    <dbReference type="NCBI Taxonomy" id="559292"/>
    <lineage>
        <taxon>Eukaryota</taxon>
        <taxon>Fungi</taxon>
        <taxon>Dikarya</taxon>
        <taxon>Ascomycota</taxon>
        <taxon>Saccharomycotina</taxon>
        <taxon>Saccharomycetes</taxon>
        <taxon>Saccharomycetales</taxon>
        <taxon>Saccharomycetaceae</taxon>
        <taxon>Saccharomyces</taxon>
    </lineage>
</organism>
<comment type="function">
    <text evidence="2 3">The natural substrate for this enzyme may be peptidyl-tRNAs which drop off the ribosome during protein synthesis.</text>
</comment>
<comment type="catalytic activity">
    <reaction evidence="3">
        <text>an N-acyl-L-alpha-aminoacyl-tRNA + H2O = an N-acyl-L-amino acid + a tRNA + H(+)</text>
        <dbReference type="Rhea" id="RHEA:54448"/>
        <dbReference type="Rhea" id="RHEA-COMP:10123"/>
        <dbReference type="Rhea" id="RHEA-COMP:13883"/>
        <dbReference type="ChEBI" id="CHEBI:15377"/>
        <dbReference type="ChEBI" id="CHEBI:15378"/>
        <dbReference type="ChEBI" id="CHEBI:59874"/>
        <dbReference type="ChEBI" id="CHEBI:78442"/>
        <dbReference type="ChEBI" id="CHEBI:138191"/>
        <dbReference type="EC" id="3.1.1.29"/>
    </reaction>
</comment>
<comment type="interaction">
    <interactant intactId="EBI-2345448">
        <id>P34222</id>
    </interactant>
    <interactant intactId="EBI-6174">
        <id>P48510</id>
        <label>DSK2</label>
    </interactant>
    <organismsDiffer>false</organismsDiffer>
    <experiments>11</experiments>
</comment>
<comment type="interaction">
    <interactant intactId="EBI-2345448">
        <id>P34222</id>
    </interactant>
    <interactant intactId="EBI-14668">
        <id>P32628</id>
        <label>RAD23</label>
    </interactant>
    <organismsDiffer>false</organismsDiffer>
    <experiments>5</experiments>
</comment>
<comment type="subcellular location">
    <subcellularLocation>
        <location>Cytoplasm</location>
    </subcellularLocation>
</comment>
<comment type="miscellaneous">
    <text evidence="4">Present with 2190 molecules/cell in log phase SD medium.</text>
</comment>
<comment type="similarity">
    <text evidence="6">Belongs to the PTH2 family.</text>
</comment>
<comment type="sequence caution" evidence="6">
    <conflict type="erroneous initiation">
        <sequence resource="EMBL-CDS" id="AAT92782"/>
    </conflict>
    <text>Extended N-terminus.</text>
</comment>
<comment type="sequence caution" evidence="6">
    <conflict type="erroneous initiation">
        <sequence resource="EMBL-CDS" id="CAA80790"/>
    </conflict>
    <text>Extended N-terminus.</text>
</comment>
<comment type="sequence caution" evidence="6">
    <conflict type="erroneous initiation">
        <sequence resource="EMBL-CDS" id="CAA84877"/>
    </conflict>
    <text>Extended N-terminus.</text>
</comment>
<dbReference type="EC" id="3.1.1.29" evidence="3"/>
<dbReference type="EMBL" id="Z23261">
    <property type="protein sequence ID" value="CAA80790.1"/>
    <property type="status" value="ALT_INIT"/>
    <property type="molecule type" value="Genomic_DNA"/>
</dbReference>
<dbReference type="EMBL" id="Z35818">
    <property type="protein sequence ID" value="CAA84877.1"/>
    <property type="status" value="ALT_INIT"/>
    <property type="molecule type" value="Genomic_DNA"/>
</dbReference>
<dbReference type="EMBL" id="AY692763">
    <property type="protein sequence ID" value="AAT92782.1"/>
    <property type="status" value="ALT_INIT"/>
    <property type="molecule type" value="Genomic_DNA"/>
</dbReference>
<dbReference type="EMBL" id="BK006936">
    <property type="protein sequence ID" value="DAA07063.2"/>
    <property type="molecule type" value="Genomic_DNA"/>
</dbReference>
<dbReference type="PIR" id="S39831">
    <property type="entry name" value="S39831"/>
</dbReference>
<dbReference type="RefSeq" id="NP_009496.2">
    <property type="nucleotide sequence ID" value="NM_001178297.2"/>
</dbReference>
<dbReference type="SMR" id="P34222"/>
<dbReference type="BioGRID" id="32642">
    <property type="interactions" value="82"/>
</dbReference>
<dbReference type="FunCoup" id="P34222">
    <property type="interactions" value="1132"/>
</dbReference>
<dbReference type="IntAct" id="P34222">
    <property type="interactions" value="4"/>
</dbReference>
<dbReference type="MINT" id="P34222"/>
<dbReference type="STRING" id="4932.YBL057C"/>
<dbReference type="iPTMnet" id="P34222"/>
<dbReference type="PaxDb" id="4932-YBL057C"/>
<dbReference type="PeptideAtlas" id="P34222"/>
<dbReference type="EnsemblFungi" id="YBL057C_mRNA">
    <property type="protein sequence ID" value="YBL057C"/>
    <property type="gene ID" value="YBL057C"/>
</dbReference>
<dbReference type="GeneID" id="852223"/>
<dbReference type="KEGG" id="sce:YBL057C"/>
<dbReference type="AGR" id="SGD:S000000153"/>
<dbReference type="SGD" id="S000000153">
    <property type="gene designation" value="PTH2"/>
</dbReference>
<dbReference type="VEuPathDB" id="FungiDB:YBL057C"/>
<dbReference type="eggNOG" id="KOG3282">
    <property type="taxonomic scope" value="Eukaryota"/>
</dbReference>
<dbReference type="GeneTree" id="ENSGT00390000015991"/>
<dbReference type="HOGENOM" id="CLU_073661_0_1_1"/>
<dbReference type="InParanoid" id="P34222"/>
<dbReference type="OMA" id="RMDLGMT"/>
<dbReference type="OrthoDB" id="1733656at2759"/>
<dbReference type="BioCyc" id="YEAST:G3O-28955-MONOMER"/>
<dbReference type="BioGRID-ORCS" id="852223">
    <property type="hits" value="2 hits in 10 CRISPR screens"/>
</dbReference>
<dbReference type="PRO" id="PR:P34222"/>
<dbReference type="Proteomes" id="UP000002311">
    <property type="component" value="Chromosome II"/>
</dbReference>
<dbReference type="RNAct" id="P34222">
    <property type="molecule type" value="protein"/>
</dbReference>
<dbReference type="GO" id="GO:0005829">
    <property type="term" value="C:cytosol"/>
    <property type="evidence" value="ECO:0000318"/>
    <property type="project" value="GO_Central"/>
</dbReference>
<dbReference type="GO" id="GO:0005741">
    <property type="term" value="C:mitochondrial outer membrane"/>
    <property type="evidence" value="ECO:0007005"/>
    <property type="project" value="SGD"/>
</dbReference>
<dbReference type="GO" id="GO:0005739">
    <property type="term" value="C:mitochondrion"/>
    <property type="evidence" value="ECO:0007005"/>
    <property type="project" value="SGD"/>
</dbReference>
<dbReference type="GO" id="GO:0004045">
    <property type="term" value="F:peptidyl-tRNA hydrolase activity"/>
    <property type="evidence" value="ECO:0000314"/>
    <property type="project" value="SGD"/>
</dbReference>
<dbReference type="GO" id="GO:0032435">
    <property type="term" value="P:negative regulation of proteasomal ubiquitin-dependent protein catabolic process"/>
    <property type="evidence" value="ECO:0000314"/>
    <property type="project" value="SGD"/>
</dbReference>
<dbReference type="CDD" id="cd02430">
    <property type="entry name" value="PTH2"/>
    <property type="match status" value="1"/>
</dbReference>
<dbReference type="FunFam" id="3.40.1490.10:FF:000001">
    <property type="entry name" value="Peptidyl-tRNA hydrolase 2"/>
    <property type="match status" value="1"/>
</dbReference>
<dbReference type="Gene3D" id="3.40.1490.10">
    <property type="entry name" value="Bit1"/>
    <property type="match status" value="1"/>
</dbReference>
<dbReference type="InterPro" id="IPR023476">
    <property type="entry name" value="Pep_tRNA_hydro_II_dom_sf"/>
</dbReference>
<dbReference type="InterPro" id="IPR002833">
    <property type="entry name" value="PTH2"/>
</dbReference>
<dbReference type="NCBIfam" id="TIGR00283">
    <property type="entry name" value="arch_pth2"/>
    <property type="match status" value="1"/>
</dbReference>
<dbReference type="PANTHER" id="PTHR12649">
    <property type="entry name" value="PEPTIDYL-TRNA HYDROLASE 2"/>
    <property type="match status" value="1"/>
</dbReference>
<dbReference type="PANTHER" id="PTHR12649:SF11">
    <property type="entry name" value="PEPTIDYL-TRNA HYDROLASE 2, MITOCHONDRIAL"/>
    <property type="match status" value="1"/>
</dbReference>
<dbReference type="Pfam" id="PF01981">
    <property type="entry name" value="PTH2"/>
    <property type="match status" value="1"/>
</dbReference>
<dbReference type="SUPFAM" id="SSF102462">
    <property type="entry name" value="Peptidyl-tRNA hydrolase II"/>
    <property type="match status" value="1"/>
</dbReference>
<feature type="chain" id="PRO_0000120284" description="Peptidyl-tRNA hydrolase 2">
    <location>
        <begin position="1"/>
        <end position="208"/>
    </location>
</feature>
<feature type="region of interest" description="Disordered" evidence="1">
    <location>
        <begin position="32"/>
        <end position="81"/>
    </location>
</feature>
<feature type="compositionally biased region" description="Low complexity" evidence="1">
    <location>
        <begin position="32"/>
        <end position="45"/>
    </location>
</feature>
<feature type="compositionally biased region" description="Basic and acidic residues" evidence="1">
    <location>
        <begin position="46"/>
        <end position="58"/>
    </location>
</feature>
<feature type="compositionally biased region" description="Acidic residues" evidence="1">
    <location>
        <begin position="59"/>
        <end position="77"/>
    </location>
</feature>
<feature type="cross-link" description="Glycyl lysine isopeptide (Lys-Gly) (interchain with G-Cter in ubiquitin)" evidence="7">
    <location>
        <position position="152"/>
    </location>
</feature>